<accession>A3KPN8</accession>
<keyword id="KW-1185">Reference proteome</keyword>
<keyword id="KW-0677">Repeat</keyword>
<keyword id="KW-0802">TPR repeat</keyword>
<protein>
    <recommendedName>
        <fullName>Tetratricopeptide repeat protein 38</fullName>
        <shortName>TPR repeat protein 38</shortName>
    </recommendedName>
</protein>
<comment type="similarity">
    <text evidence="1">Belongs to the TTC38 family.</text>
</comment>
<organism>
    <name type="scientific">Danio rerio</name>
    <name type="common">Zebrafish</name>
    <name type="synonym">Brachydanio rerio</name>
    <dbReference type="NCBI Taxonomy" id="7955"/>
    <lineage>
        <taxon>Eukaryota</taxon>
        <taxon>Metazoa</taxon>
        <taxon>Chordata</taxon>
        <taxon>Craniata</taxon>
        <taxon>Vertebrata</taxon>
        <taxon>Euteleostomi</taxon>
        <taxon>Actinopterygii</taxon>
        <taxon>Neopterygii</taxon>
        <taxon>Teleostei</taxon>
        <taxon>Ostariophysi</taxon>
        <taxon>Cypriniformes</taxon>
        <taxon>Danionidae</taxon>
        <taxon>Danioninae</taxon>
        <taxon>Danio</taxon>
    </lineage>
</organism>
<feature type="chain" id="PRO_0000321533" description="Tetratricopeptide repeat protein 38">
    <location>
        <begin position="1"/>
        <end position="466"/>
    </location>
</feature>
<feature type="repeat" description="TPR 1">
    <location>
        <begin position="175"/>
        <end position="212"/>
    </location>
</feature>
<feature type="repeat" description="TPR 2">
    <location>
        <begin position="251"/>
        <end position="284"/>
    </location>
</feature>
<feature type="repeat" description="TPR 3">
    <location>
        <begin position="368"/>
        <end position="400"/>
    </location>
</feature>
<name>TTC38_DANRE</name>
<gene>
    <name type="primary">ttc38</name>
    <name type="ORF">si:ch211-249g22.2</name>
    <name type="ORF">zgc:112407</name>
</gene>
<evidence type="ECO:0000305" key="1"/>
<sequence>MICVVIMRHQAWQSDGLPLSSSSNEACKLYDAILSQYVTWRNDETLGGIEGCITSIKAADPDFVMGHVISTGLELVGTGSSVLRDERLASAVRRTVELADTQQLTSREKNHVKAVQLFSKGALHKACEVWECILADHPTDLLALKFAHDGFFYLGEQTQMRDSVARVMPHWKPHMPLYRQIKGMYSFGLLETRLYDEAEKMAKEALSLTPEDGWSVHAVAHVHEMKAEVEKGLNFMASTEKNWTVCDMLACHNYWHWALYHIEKGNYEAALKIFDEQVSQRCVKSGAMLDIVDSCSLLYRLELEGVSVGERYRELLQVTQPHSEDHTLLFNDLHFLMVSLGSKDTGTTQRLLESLQELAKDPAENRQLQIAERVGLPMCQALLEFEQRNYRQAVELLKPIKQSFVEIGGSDAQRDVFSQLLIHAAMKSGDKEHQQLARCMLMERDAVRPNSPLTDRLIQRAHSLHA</sequence>
<dbReference type="EMBL" id="BX255955">
    <property type="protein sequence ID" value="CAM56462.1"/>
    <property type="molecule type" value="Genomic_DNA"/>
</dbReference>
<dbReference type="RefSeq" id="NP_001018535.2">
    <property type="nucleotide sequence ID" value="NM_001020699.2"/>
</dbReference>
<dbReference type="SMR" id="A3KPN8"/>
<dbReference type="FunCoup" id="A3KPN8">
    <property type="interactions" value="587"/>
</dbReference>
<dbReference type="STRING" id="7955.ENSDARP00000061837"/>
<dbReference type="PaxDb" id="7955-ENSDARP00000061837"/>
<dbReference type="PeptideAtlas" id="A3KPN8"/>
<dbReference type="GeneID" id="553728"/>
<dbReference type="KEGG" id="dre:553728"/>
<dbReference type="AGR" id="ZFIN:ZDB-GENE-050522-318"/>
<dbReference type="CTD" id="55020"/>
<dbReference type="ZFIN" id="ZDB-GENE-050522-318">
    <property type="gene designation" value="ttc38"/>
</dbReference>
<dbReference type="eggNOG" id="KOG2610">
    <property type="taxonomic scope" value="Eukaryota"/>
</dbReference>
<dbReference type="InParanoid" id="A3KPN8"/>
<dbReference type="OrthoDB" id="1427555at2759"/>
<dbReference type="PhylomeDB" id="A3KPN8"/>
<dbReference type="PRO" id="PR:A3KPN8"/>
<dbReference type="Proteomes" id="UP000000437">
    <property type="component" value="Alternate scaffold 18"/>
</dbReference>
<dbReference type="Proteomes" id="UP000000437">
    <property type="component" value="Chromosome 18"/>
</dbReference>
<dbReference type="CDD" id="cd05804">
    <property type="entry name" value="StaR_like"/>
    <property type="match status" value="1"/>
</dbReference>
<dbReference type="Gene3D" id="1.25.40.10">
    <property type="entry name" value="Tetratricopeptide repeat domain"/>
    <property type="match status" value="1"/>
</dbReference>
<dbReference type="InterPro" id="IPR011990">
    <property type="entry name" value="TPR-like_helical_dom_sf"/>
</dbReference>
<dbReference type="InterPro" id="IPR033891">
    <property type="entry name" value="TTC38"/>
</dbReference>
<dbReference type="PANTHER" id="PTHR16263">
    <property type="entry name" value="TETRATRICOPEPTIDE REPEAT PROTEIN 38"/>
    <property type="match status" value="1"/>
</dbReference>
<dbReference type="PANTHER" id="PTHR16263:SF4">
    <property type="entry name" value="TETRATRICOPEPTIDE REPEAT PROTEIN 38"/>
    <property type="match status" value="1"/>
</dbReference>
<dbReference type="SUPFAM" id="SSF48452">
    <property type="entry name" value="TPR-like"/>
    <property type="match status" value="1"/>
</dbReference>
<proteinExistence type="inferred from homology"/>
<reference key="1">
    <citation type="journal article" date="2013" name="Nature">
        <title>The zebrafish reference genome sequence and its relationship to the human genome.</title>
        <authorList>
            <person name="Howe K."/>
            <person name="Clark M.D."/>
            <person name="Torroja C.F."/>
            <person name="Torrance J."/>
            <person name="Berthelot C."/>
            <person name="Muffato M."/>
            <person name="Collins J.E."/>
            <person name="Humphray S."/>
            <person name="McLaren K."/>
            <person name="Matthews L."/>
            <person name="McLaren S."/>
            <person name="Sealy I."/>
            <person name="Caccamo M."/>
            <person name="Churcher C."/>
            <person name="Scott C."/>
            <person name="Barrett J.C."/>
            <person name="Koch R."/>
            <person name="Rauch G.J."/>
            <person name="White S."/>
            <person name="Chow W."/>
            <person name="Kilian B."/>
            <person name="Quintais L.T."/>
            <person name="Guerra-Assuncao J.A."/>
            <person name="Zhou Y."/>
            <person name="Gu Y."/>
            <person name="Yen J."/>
            <person name="Vogel J.H."/>
            <person name="Eyre T."/>
            <person name="Redmond S."/>
            <person name="Banerjee R."/>
            <person name="Chi J."/>
            <person name="Fu B."/>
            <person name="Langley E."/>
            <person name="Maguire S.F."/>
            <person name="Laird G.K."/>
            <person name="Lloyd D."/>
            <person name="Kenyon E."/>
            <person name="Donaldson S."/>
            <person name="Sehra H."/>
            <person name="Almeida-King J."/>
            <person name="Loveland J."/>
            <person name="Trevanion S."/>
            <person name="Jones M."/>
            <person name="Quail M."/>
            <person name="Willey D."/>
            <person name="Hunt A."/>
            <person name="Burton J."/>
            <person name="Sims S."/>
            <person name="McLay K."/>
            <person name="Plumb B."/>
            <person name="Davis J."/>
            <person name="Clee C."/>
            <person name="Oliver K."/>
            <person name="Clark R."/>
            <person name="Riddle C."/>
            <person name="Elliot D."/>
            <person name="Threadgold G."/>
            <person name="Harden G."/>
            <person name="Ware D."/>
            <person name="Begum S."/>
            <person name="Mortimore B."/>
            <person name="Kerry G."/>
            <person name="Heath P."/>
            <person name="Phillimore B."/>
            <person name="Tracey A."/>
            <person name="Corby N."/>
            <person name="Dunn M."/>
            <person name="Johnson C."/>
            <person name="Wood J."/>
            <person name="Clark S."/>
            <person name="Pelan S."/>
            <person name="Griffiths G."/>
            <person name="Smith M."/>
            <person name="Glithero R."/>
            <person name="Howden P."/>
            <person name="Barker N."/>
            <person name="Lloyd C."/>
            <person name="Stevens C."/>
            <person name="Harley J."/>
            <person name="Holt K."/>
            <person name="Panagiotidis G."/>
            <person name="Lovell J."/>
            <person name="Beasley H."/>
            <person name="Henderson C."/>
            <person name="Gordon D."/>
            <person name="Auger K."/>
            <person name="Wright D."/>
            <person name="Collins J."/>
            <person name="Raisen C."/>
            <person name="Dyer L."/>
            <person name="Leung K."/>
            <person name="Robertson L."/>
            <person name="Ambridge K."/>
            <person name="Leongamornlert D."/>
            <person name="McGuire S."/>
            <person name="Gilderthorp R."/>
            <person name="Griffiths C."/>
            <person name="Manthravadi D."/>
            <person name="Nichol S."/>
            <person name="Barker G."/>
            <person name="Whitehead S."/>
            <person name="Kay M."/>
            <person name="Brown J."/>
            <person name="Murnane C."/>
            <person name="Gray E."/>
            <person name="Humphries M."/>
            <person name="Sycamore N."/>
            <person name="Barker D."/>
            <person name="Saunders D."/>
            <person name="Wallis J."/>
            <person name="Babbage A."/>
            <person name="Hammond S."/>
            <person name="Mashreghi-Mohammadi M."/>
            <person name="Barr L."/>
            <person name="Martin S."/>
            <person name="Wray P."/>
            <person name="Ellington A."/>
            <person name="Matthews N."/>
            <person name="Ellwood M."/>
            <person name="Woodmansey R."/>
            <person name="Clark G."/>
            <person name="Cooper J."/>
            <person name="Tromans A."/>
            <person name="Grafham D."/>
            <person name="Skuce C."/>
            <person name="Pandian R."/>
            <person name="Andrews R."/>
            <person name="Harrison E."/>
            <person name="Kimberley A."/>
            <person name="Garnett J."/>
            <person name="Fosker N."/>
            <person name="Hall R."/>
            <person name="Garner P."/>
            <person name="Kelly D."/>
            <person name="Bird C."/>
            <person name="Palmer S."/>
            <person name="Gehring I."/>
            <person name="Berger A."/>
            <person name="Dooley C.M."/>
            <person name="Ersan-Urun Z."/>
            <person name="Eser C."/>
            <person name="Geiger H."/>
            <person name="Geisler M."/>
            <person name="Karotki L."/>
            <person name="Kirn A."/>
            <person name="Konantz J."/>
            <person name="Konantz M."/>
            <person name="Oberlander M."/>
            <person name="Rudolph-Geiger S."/>
            <person name="Teucke M."/>
            <person name="Lanz C."/>
            <person name="Raddatz G."/>
            <person name="Osoegawa K."/>
            <person name="Zhu B."/>
            <person name="Rapp A."/>
            <person name="Widaa S."/>
            <person name="Langford C."/>
            <person name="Yang F."/>
            <person name="Schuster S.C."/>
            <person name="Carter N.P."/>
            <person name="Harrow J."/>
            <person name="Ning Z."/>
            <person name="Herrero J."/>
            <person name="Searle S.M."/>
            <person name="Enright A."/>
            <person name="Geisler R."/>
            <person name="Plasterk R.H."/>
            <person name="Lee C."/>
            <person name="Westerfield M."/>
            <person name="de Jong P.J."/>
            <person name="Zon L.I."/>
            <person name="Postlethwait J.H."/>
            <person name="Nusslein-Volhard C."/>
            <person name="Hubbard T.J."/>
            <person name="Roest Crollius H."/>
            <person name="Rogers J."/>
            <person name="Stemple D.L."/>
        </authorList>
    </citation>
    <scope>NUCLEOTIDE SEQUENCE [LARGE SCALE GENOMIC DNA]</scope>
    <source>
        <strain>Tuebingen</strain>
    </source>
</reference>